<sequence>MNERPILFFDSGIGGLTVLREVRVLIPETQFIYVADDAGFPYGNWEENVLKNHILKVFTNLLTLYNPTLCVVACNTVSTLMMADLRKEFPHTLFVGTVPAIKLAAKQTKSGFISVLATPGTVKRAYTRELINSFAGQCHVQLVGSEKLAAFAEDYLRGKPIDLEELRNEILPCFFEQNGKYTDTIVLACTHYPFLINLFREQALWPVKWIDPAKAIAKHIRSLLPERMYHKNTKKLKDFALFTSQNITSSTKHLLKEFGLNITKGVDFEM</sequence>
<accession>Q6FZU3</accession>
<reference key="1">
    <citation type="journal article" date="2004" name="Proc. Natl. Acad. Sci. U.S.A.">
        <title>The louse-borne human pathogen Bartonella quintana is a genomic derivative of the zoonotic agent Bartonella henselae.</title>
        <authorList>
            <person name="Alsmark U.C.M."/>
            <person name="Frank A.C."/>
            <person name="Karlberg E.O."/>
            <person name="Legault B.-A."/>
            <person name="Ardell D.H."/>
            <person name="Canbaeck B."/>
            <person name="Eriksson A.-S."/>
            <person name="Naeslund A.K."/>
            <person name="Handley S.A."/>
            <person name="Huvet M."/>
            <person name="La Scola B."/>
            <person name="Holmberg M."/>
            <person name="Andersson S.G.E."/>
        </authorList>
    </citation>
    <scope>NUCLEOTIDE SEQUENCE [LARGE SCALE GENOMIC DNA]</scope>
    <source>
        <strain>Toulouse</strain>
    </source>
</reference>
<comment type="function">
    <text evidence="1">Provides the (R)-glutamate required for cell wall biosynthesis.</text>
</comment>
<comment type="catalytic activity">
    <reaction evidence="1">
        <text>L-glutamate = D-glutamate</text>
        <dbReference type="Rhea" id="RHEA:12813"/>
        <dbReference type="ChEBI" id="CHEBI:29985"/>
        <dbReference type="ChEBI" id="CHEBI:29986"/>
        <dbReference type="EC" id="5.1.1.3"/>
    </reaction>
</comment>
<comment type="pathway">
    <text evidence="1">Cell wall biogenesis; peptidoglycan biosynthesis.</text>
</comment>
<comment type="similarity">
    <text evidence="1">Belongs to the aspartate/glutamate racemases family.</text>
</comment>
<feature type="chain" id="PRO_1000047547" description="Glutamate racemase">
    <location>
        <begin position="1"/>
        <end position="270"/>
    </location>
</feature>
<feature type="active site" description="Proton donor/acceptor" evidence="1">
    <location>
        <position position="74"/>
    </location>
</feature>
<feature type="active site" description="Proton donor/acceptor" evidence="1">
    <location>
        <position position="189"/>
    </location>
</feature>
<feature type="binding site" evidence="1">
    <location>
        <begin position="10"/>
        <end position="11"/>
    </location>
    <ligand>
        <name>substrate</name>
    </ligand>
</feature>
<feature type="binding site" evidence="1">
    <location>
        <begin position="42"/>
        <end position="43"/>
    </location>
    <ligand>
        <name>substrate</name>
    </ligand>
</feature>
<feature type="binding site" evidence="1">
    <location>
        <begin position="75"/>
        <end position="76"/>
    </location>
    <ligand>
        <name>substrate</name>
    </ligand>
</feature>
<feature type="binding site" evidence="1">
    <location>
        <begin position="190"/>
        <end position="191"/>
    </location>
    <ligand>
        <name>substrate</name>
    </ligand>
</feature>
<evidence type="ECO:0000255" key="1">
    <source>
        <dbReference type="HAMAP-Rule" id="MF_00258"/>
    </source>
</evidence>
<organism>
    <name type="scientific">Bartonella quintana (strain Toulouse)</name>
    <name type="common">Rochalimaea quintana</name>
    <dbReference type="NCBI Taxonomy" id="283165"/>
    <lineage>
        <taxon>Bacteria</taxon>
        <taxon>Pseudomonadati</taxon>
        <taxon>Pseudomonadota</taxon>
        <taxon>Alphaproteobacteria</taxon>
        <taxon>Hyphomicrobiales</taxon>
        <taxon>Bartonellaceae</taxon>
        <taxon>Bartonella</taxon>
    </lineage>
</organism>
<protein>
    <recommendedName>
        <fullName evidence="1">Glutamate racemase</fullName>
        <ecNumber evidence="1">5.1.1.3</ecNumber>
    </recommendedName>
</protein>
<keyword id="KW-0133">Cell shape</keyword>
<keyword id="KW-0961">Cell wall biogenesis/degradation</keyword>
<keyword id="KW-0413">Isomerase</keyword>
<keyword id="KW-0573">Peptidoglycan synthesis</keyword>
<gene>
    <name evidence="1" type="primary">murI</name>
    <name type="ordered locus">BQ06200</name>
</gene>
<proteinExistence type="inferred from homology"/>
<name>MURI_BARQU</name>
<dbReference type="EC" id="5.1.1.3" evidence="1"/>
<dbReference type="EMBL" id="BX897700">
    <property type="protein sequence ID" value="CAF26111.1"/>
    <property type="molecule type" value="Genomic_DNA"/>
</dbReference>
<dbReference type="RefSeq" id="WP_011179374.1">
    <property type="nucleotide sequence ID" value="NC_005955.1"/>
</dbReference>
<dbReference type="SMR" id="Q6FZU3"/>
<dbReference type="KEGG" id="bqu:BQ06200"/>
<dbReference type="eggNOG" id="COG0796">
    <property type="taxonomic scope" value="Bacteria"/>
</dbReference>
<dbReference type="HOGENOM" id="CLU_052344_2_0_5"/>
<dbReference type="OrthoDB" id="9801055at2"/>
<dbReference type="UniPathway" id="UPA00219"/>
<dbReference type="Proteomes" id="UP000000597">
    <property type="component" value="Chromosome"/>
</dbReference>
<dbReference type="GO" id="GO:0008881">
    <property type="term" value="F:glutamate racemase activity"/>
    <property type="evidence" value="ECO:0007669"/>
    <property type="project" value="UniProtKB-UniRule"/>
</dbReference>
<dbReference type="GO" id="GO:0071555">
    <property type="term" value="P:cell wall organization"/>
    <property type="evidence" value="ECO:0007669"/>
    <property type="project" value="UniProtKB-KW"/>
</dbReference>
<dbReference type="GO" id="GO:0009252">
    <property type="term" value="P:peptidoglycan biosynthetic process"/>
    <property type="evidence" value="ECO:0007669"/>
    <property type="project" value="UniProtKB-UniRule"/>
</dbReference>
<dbReference type="GO" id="GO:0008360">
    <property type="term" value="P:regulation of cell shape"/>
    <property type="evidence" value="ECO:0007669"/>
    <property type="project" value="UniProtKB-KW"/>
</dbReference>
<dbReference type="Gene3D" id="3.40.50.1860">
    <property type="match status" value="2"/>
</dbReference>
<dbReference type="HAMAP" id="MF_00258">
    <property type="entry name" value="Glu_racemase"/>
    <property type="match status" value="1"/>
</dbReference>
<dbReference type="InterPro" id="IPR015942">
    <property type="entry name" value="Asp/Glu/hydantoin_racemase"/>
</dbReference>
<dbReference type="InterPro" id="IPR001920">
    <property type="entry name" value="Asp/Glu_race"/>
</dbReference>
<dbReference type="InterPro" id="IPR033134">
    <property type="entry name" value="Asp/Glu_racemase_AS_2"/>
</dbReference>
<dbReference type="InterPro" id="IPR004391">
    <property type="entry name" value="Glu_race"/>
</dbReference>
<dbReference type="NCBIfam" id="TIGR00067">
    <property type="entry name" value="glut_race"/>
    <property type="match status" value="1"/>
</dbReference>
<dbReference type="PANTHER" id="PTHR21198">
    <property type="entry name" value="GLUTAMATE RACEMASE"/>
    <property type="match status" value="1"/>
</dbReference>
<dbReference type="PANTHER" id="PTHR21198:SF2">
    <property type="entry name" value="GLUTAMATE RACEMASE"/>
    <property type="match status" value="1"/>
</dbReference>
<dbReference type="Pfam" id="PF01177">
    <property type="entry name" value="Asp_Glu_race"/>
    <property type="match status" value="1"/>
</dbReference>
<dbReference type="SUPFAM" id="SSF53681">
    <property type="entry name" value="Aspartate/glutamate racemase"/>
    <property type="match status" value="2"/>
</dbReference>
<dbReference type="PROSITE" id="PS00924">
    <property type="entry name" value="ASP_GLU_RACEMASE_2"/>
    <property type="match status" value="1"/>
</dbReference>